<evidence type="ECO:0000255" key="1">
    <source>
        <dbReference type="HAMAP-Rule" id="MF_00098"/>
    </source>
</evidence>
<feature type="chain" id="PRO_1000199278" description="Methionine--tRNA ligase">
    <location>
        <begin position="1"/>
        <end position="623"/>
    </location>
</feature>
<feature type="short sequence motif" description="'HIGH' region">
    <location>
        <begin position="11"/>
        <end position="21"/>
    </location>
</feature>
<feature type="short sequence motif" description="'KMSKS' region">
    <location>
        <begin position="347"/>
        <end position="351"/>
    </location>
</feature>
<feature type="binding site" evidence="1">
    <location>
        <position position="143"/>
    </location>
    <ligand>
        <name>Zn(2+)</name>
        <dbReference type="ChEBI" id="CHEBI:29105"/>
    </ligand>
</feature>
<feature type="binding site" evidence="1">
    <location>
        <position position="146"/>
    </location>
    <ligand>
        <name>Zn(2+)</name>
        <dbReference type="ChEBI" id="CHEBI:29105"/>
    </ligand>
</feature>
<feature type="binding site" evidence="1">
    <location>
        <position position="156"/>
    </location>
    <ligand>
        <name>Zn(2+)</name>
        <dbReference type="ChEBI" id="CHEBI:29105"/>
    </ligand>
</feature>
<feature type="binding site" evidence="1">
    <location>
        <position position="159"/>
    </location>
    <ligand>
        <name>Zn(2+)</name>
        <dbReference type="ChEBI" id="CHEBI:29105"/>
    </ligand>
</feature>
<feature type="binding site" evidence="1">
    <location>
        <position position="350"/>
    </location>
    <ligand>
        <name>ATP</name>
        <dbReference type="ChEBI" id="CHEBI:30616"/>
    </ligand>
</feature>
<sequence>MSHIMVNVAWPYANGPRHIGHVAGFGVPSDVYARYQRMKGNDVLMVSGTDEHGTPILVEADKEGVTPQELANRYNRVIANDLCNLGLSYDLFTRTTTKNHEHVVQEMFRQCLANGYIYKGTQKVAISPSTGRTLPDRYIEGECPICHAQGARGDQCDNCGNELDPDELINPVSKINGETPIFEETEHYFLDLPALAEANLAWLKTRKGWRPNVLNFSIGLFKEVKPRAITRDIDWGIPVPVPGWIDNPNKRLYVWFDAVIGYLSASIEWARRSGDPEAWRAWWNDPATPGYYFMGKDNITFHSQIWPSEMLAYNGEGSKGGEPGELGRLDLPEQVVASEFMTMEGKKFSSSRGIVIYVKDILSRYPVDAVRYYISAAGPESSDSDFTWAEFVRQNNEVLAASWGNLVNRVANLIAKNFGQIPPIVEEKMTDEDRALLAQSSAAFDTVGALIEQHRQKSALNDAMSLVGDINKYISATEPWKIKDDPERLGTVLHVAAQAVSDANHLLAPFLPHSSQKVWEALGGEGTFSPLPHIEEVNDLDDPEFTYPVITGKYVLGENVHPWKSEPIVVGAPVVKPTPIFAKIPPEAVDEELARFDADLKARREAEQARLDAEKAKLAAGEE</sequence>
<gene>
    <name evidence="1" type="primary">metG</name>
    <name type="ordered locus">BLA_0885</name>
</gene>
<proteinExistence type="inferred from homology"/>
<keyword id="KW-0030">Aminoacyl-tRNA synthetase</keyword>
<keyword id="KW-0067">ATP-binding</keyword>
<keyword id="KW-0963">Cytoplasm</keyword>
<keyword id="KW-0436">Ligase</keyword>
<keyword id="KW-0479">Metal-binding</keyword>
<keyword id="KW-0547">Nucleotide-binding</keyword>
<keyword id="KW-0648">Protein biosynthesis</keyword>
<keyword id="KW-1185">Reference proteome</keyword>
<keyword id="KW-0862">Zinc</keyword>
<organism>
    <name type="scientific">Bifidobacterium animalis subsp. lactis (strain AD011)</name>
    <dbReference type="NCBI Taxonomy" id="442563"/>
    <lineage>
        <taxon>Bacteria</taxon>
        <taxon>Bacillati</taxon>
        <taxon>Actinomycetota</taxon>
        <taxon>Actinomycetes</taxon>
        <taxon>Bifidobacteriales</taxon>
        <taxon>Bifidobacteriaceae</taxon>
        <taxon>Bifidobacterium</taxon>
    </lineage>
</organism>
<comment type="function">
    <text evidence="1">Is required not only for elongation of protein synthesis but also for the initiation of all mRNA translation through initiator tRNA(fMet) aminoacylation.</text>
</comment>
<comment type="catalytic activity">
    <reaction evidence="1">
        <text>tRNA(Met) + L-methionine + ATP = L-methionyl-tRNA(Met) + AMP + diphosphate</text>
        <dbReference type="Rhea" id="RHEA:13481"/>
        <dbReference type="Rhea" id="RHEA-COMP:9667"/>
        <dbReference type="Rhea" id="RHEA-COMP:9698"/>
        <dbReference type="ChEBI" id="CHEBI:30616"/>
        <dbReference type="ChEBI" id="CHEBI:33019"/>
        <dbReference type="ChEBI" id="CHEBI:57844"/>
        <dbReference type="ChEBI" id="CHEBI:78442"/>
        <dbReference type="ChEBI" id="CHEBI:78530"/>
        <dbReference type="ChEBI" id="CHEBI:456215"/>
        <dbReference type="EC" id="6.1.1.10"/>
    </reaction>
</comment>
<comment type="cofactor">
    <cofactor evidence="1">
        <name>Zn(2+)</name>
        <dbReference type="ChEBI" id="CHEBI:29105"/>
    </cofactor>
    <text evidence="1">Binds 1 zinc ion per subunit.</text>
</comment>
<comment type="subunit">
    <text evidence="1">Monomer.</text>
</comment>
<comment type="subcellular location">
    <subcellularLocation>
        <location evidence="1">Cytoplasm</location>
    </subcellularLocation>
</comment>
<comment type="similarity">
    <text evidence="1">Belongs to the class-I aminoacyl-tRNA synthetase family. MetG type 1 subfamily.</text>
</comment>
<name>SYM_BIFA0</name>
<reference key="1">
    <citation type="journal article" date="2009" name="J. Bacteriol.">
        <title>Genome sequence of the probiotic bacterium Bifidobacterium animalis subsp. lactis AD011.</title>
        <authorList>
            <person name="Kim J.F."/>
            <person name="Jeong H."/>
            <person name="Yu D.S."/>
            <person name="Choi S.-H."/>
            <person name="Hur C.-G."/>
            <person name="Park M.-S."/>
            <person name="Yoon S.H."/>
            <person name="Kim D.-W."/>
            <person name="Ji G.E."/>
            <person name="Park H.-S."/>
            <person name="Oh T.K."/>
        </authorList>
    </citation>
    <scope>NUCLEOTIDE SEQUENCE [LARGE SCALE GENOMIC DNA]</scope>
    <source>
        <strain>AD011</strain>
    </source>
</reference>
<protein>
    <recommendedName>
        <fullName evidence="1">Methionine--tRNA ligase</fullName>
        <ecNumber evidence="1">6.1.1.10</ecNumber>
    </recommendedName>
    <alternativeName>
        <fullName evidence="1">Methionyl-tRNA synthetase</fullName>
        <shortName evidence="1">MetRS</shortName>
    </alternativeName>
</protein>
<accession>B8DT48</accession>
<dbReference type="EC" id="6.1.1.10" evidence="1"/>
<dbReference type="EMBL" id="CP001213">
    <property type="protein sequence ID" value="ACL29177.1"/>
    <property type="molecule type" value="Genomic_DNA"/>
</dbReference>
<dbReference type="RefSeq" id="WP_012619863.1">
    <property type="nucleotide sequence ID" value="NC_011835.1"/>
</dbReference>
<dbReference type="SMR" id="B8DT48"/>
<dbReference type="STRING" id="442563.BLA_0885"/>
<dbReference type="GeneID" id="29696596"/>
<dbReference type="KEGG" id="bla:BLA_0885"/>
<dbReference type="PATRIC" id="fig|442563.4.peg.926"/>
<dbReference type="HOGENOM" id="CLU_009710_1_2_11"/>
<dbReference type="Proteomes" id="UP000002456">
    <property type="component" value="Chromosome"/>
</dbReference>
<dbReference type="GO" id="GO:0005829">
    <property type="term" value="C:cytosol"/>
    <property type="evidence" value="ECO:0007669"/>
    <property type="project" value="TreeGrafter"/>
</dbReference>
<dbReference type="GO" id="GO:0005524">
    <property type="term" value="F:ATP binding"/>
    <property type="evidence" value="ECO:0007669"/>
    <property type="project" value="UniProtKB-UniRule"/>
</dbReference>
<dbReference type="GO" id="GO:0046872">
    <property type="term" value="F:metal ion binding"/>
    <property type="evidence" value="ECO:0007669"/>
    <property type="project" value="UniProtKB-KW"/>
</dbReference>
<dbReference type="GO" id="GO:0004825">
    <property type="term" value="F:methionine-tRNA ligase activity"/>
    <property type="evidence" value="ECO:0007669"/>
    <property type="project" value="UniProtKB-UniRule"/>
</dbReference>
<dbReference type="GO" id="GO:0006431">
    <property type="term" value="P:methionyl-tRNA aminoacylation"/>
    <property type="evidence" value="ECO:0007669"/>
    <property type="project" value="UniProtKB-UniRule"/>
</dbReference>
<dbReference type="CDD" id="cd07957">
    <property type="entry name" value="Anticodon_Ia_Met"/>
    <property type="match status" value="1"/>
</dbReference>
<dbReference type="CDD" id="cd00814">
    <property type="entry name" value="MetRS_core"/>
    <property type="match status" value="1"/>
</dbReference>
<dbReference type="FunFam" id="2.20.28.20:FF:000001">
    <property type="entry name" value="Methionine--tRNA ligase"/>
    <property type="match status" value="1"/>
</dbReference>
<dbReference type="Gene3D" id="3.40.50.620">
    <property type="entry name" value="HUPs"/>
    <property type="match status" value="1"/>
</dbReference>
<dbReference type="Gene3D" id="1.10.730.10">
    <property type="entry name" value="Isoleucyl-tRNA Synthetase, Domain 1"/>
    <property type="match status" value="1"/>
</dbReference>
<dbReference type="Gene3D" id="2.20.28.20">
    <property type="entry name" value="Methionyl-tRNA synthetase, Zn-domain"/>
    <property type="match status" value="1"/>
</dbReference>
<dbReference type="HAMAP" id="MF_00098">
    <property type="entry name" value="Met_tRNA_synth_type1"/>
    <property type="match status" value="1"/>
</dbReference>
<dbReference type="InterPro" id="IPR041872">
    <property type="entry name" value="Anticodon_Met"/>
</dbReference>
<dbReference type="InterPro" id="IPR013155">
    <property type="entry name" value="M/V/L/I-tRNA-synth_anticd-bd"/>
</dbReference>
<dbReference type="InterPro" id="IPR023458">
    <property type="entry name" value="Met-tRNA_ligase_1"/>
</dbReference>
<dbReference type="InterPro" id="IPR014758">
    <property type="entry name" value="Met-tRNA_synth"/>
</dbReference>
<dbReference type="InterPro" id="IPR015413">
    <property type="entry name" value="Methionyl/Leucyl_tRNA_Synth"/>
</dbReference>
<dbReference type="InterPro" id="IPR033911">
    <property type="entry name" value="MetRS_core"/>
</dbReference>
<dbReference type="InterPro" id="IPR029038">
    <property type="entry name" value="MetRS_Zn"/>
</dbReference>
<dbReference type="InterPro" id="IPR014729">
    <property type="entry name" value="Rossmann-like_a/b/a_fold"/>
</dbReference>
<dbReference type="InterPro" id="IPR009080">
    <property type="entry name" value="tRNAsynth_Ia_anticodon-bd"/>
</dbReference>
<dbReference type="NCBIfam" id="TIGR00398">
    <property type="entry name" value="metG"/>
    <property type="match status" value="1"/>
</dbReference>
<dbReference type="PANTHER" id="PTHR45765">
    <property type="entry name" value="METHIONINE--TRNA LIGASE"/>
    <property type="match status" value="1"/>
</dbReference>
<dbReference type="PANTHER" id="PTHR45765:SF1">
    <property type="entry name" value="METHIONINE--TRNA LIGASE, CYTOPLASMIC"/>
    <property type="match status" value="1"/>
</dbReference>
<dbReference type="Pfam" id="PF08264">
    <property type="entry name" value="Anticodon_1"/>
    <property type="match status" value="1"/>
</dbReference>
<dbReference type="Pfam" id="PF09334">
    <property type="entry name" value="tRNA-synt_1g"/>
    <property type="match status" value="1"/>
</dbReference>
<dbReference type="PRINTS" id="PR01041">
    <property type="entry name" value="TRNASYNTHMET"/>
</dbReference>
<dbReference type="SUPFAM" id="SSF47323">
    <property type="entry name" value="Anticodon-binding domain of a subclass of class I aminoacyl-tRNA synthetases"/>
    <property type="match status" value="1"/>
</dbReference>
<dbReference type="SUPFAM" id="SSF57770">
    <property type="entry name" value="Methionyl-tRNA synthetase (MetRS), Zn-domain"/>
    <property type="match status" value="1"/>
</dbReference>
<dbReference type="SUPFAM" id="SSF52374">
    <property type="entry name" value="Nucleotidylyl transferase"/>
    <property type="match status" value="1"/>
</dbReference>